<organism>
    <name type="scientific">Saccharomyces cerevisiae (strain VIN 13)</name>
    <name type="common">Baker's yeast</name>
    <dbReference type="NCBI Taxonomy" id="764099"/>
    <lineage>
        <taxon>Eukaryota</taxon>
        <taxon>Fungi</taxon>
        <taxon>Dikarya</taxon>
        <taxon>Ascomycota</taxon>
        <taxon>Saccharomycotina</taxon>
        <taxon>Saccharomycetes</taxon>
        <taxon>Saccharomycetales</taxon>
        <taxon>Saccharomycetaceae</taxon>
        <taxon>Saccharomyces</taxon>
    </lineage>
</organism>
<name>BLI1_YEASV</name>
<evidence type="ECO:0000250" key="1"/>
<evidence type="ECO:0000255" key="2"/>
<evidence type="ECO:0000305" key="3"/>
<sequence>MGEQNKLYYDVEKLVNSLQESFDLDCAQSVSLFTSKSRSNEAWLEELENKFKLKDDVELDDVENLRAEIDMKLNMLEDKVSYYERLYKELEEFQNEIKIKTVVNNRRQSRTPK</sequence>
<feature type="chain" id="PRO_0000410625" description="Biogenesis of lysosome-related organelles complex 1 subunit BLI1">
    <location>
        <begin position="1"/>
        <end position="113"/>
    </location>
</feature>
<feature type="coiled-coil region" evidence="2">
    <location>
        <begin position="57"/>
        <end position="97"/>
    </location>
</feature>
<keyword id="KW-0175">Coiled coil</keyword>
<keyword id="KW-0967">Endosome</keyword>
<keyword id="KW-0813">Transport</keyword>
<reference key="1">
    <citation type="journal article" date="2011" name="PLoS Genet.">
        <title>Whole-genome comparison reveals novel genetic elements that characterize the genome of industrial strains of Saccharomyces cerevisiae.</title>
        <authorList>
            <person name="Borneman A.R."/>
            <person name="Desany B.A."/>
            <person name="Riches D."/>
            <person name="Affourtit J.P."/>
            <person name="Forgan A.H."/>
            <person name="Pretorius I.S."/>
            <person name="Egholm M."/>
            <person name="Chambers P.J."/>
        </authorList>
    </citation>
    <scope>NUCLEOTIDE SEQUENCE [LARGE SCALE GENOMIC DNA]</scope>
    <source>
        <strain>VIN 13</strain>
    </source>
</reference>
<gene>
    <name type="primary">BLI1</name>
    <name type="ORF">VIN13_2879</name>
</gene>
<dbReference type="EMBL" id="ADXC01000053">
    <property type="protein sequence ID" value="EGA77976.1"/>
    <property type="molecule type" value="Genomic_DNA"/>
</dbReference>
<dbReference type="HOGENOM" id="CLU_168467_0_0_1"/>
<dbReference type="OMA" id="AVANHEW"/>
<dbReference type="GO" id="GO:0005768">
    <property type="term" value="C:endosome"/>
    <property type="evidence" value="ECO:0007669"/>
    <property type="project" value="UniProtKB-SubCell"/>
</dbReference>
<dbReference type="InterPro" id="IPR020491">
    <property type="entry name" value="BLI1"/>
</dbReference>
<dbReference type="Pfam" id="PF17324">
    <property type="entry name" value="BLI1"/>
    <property type="match status" value="1"/>
</dbReference>
<accession>E7LWV5</accession>
<comment type="function">
    <text evidence="1">Component of the biogenesis of lysosome-related organelles complex-1 (BLOC-1) involved in endosomal cargo sorting.</text>
</comment>
<comment type="subunit">
    <text evidence="1">Component of the biogenesis of lysosome-related organelles complex-1 (BLOC-1) composed of at least BLI1, BLS1, CNL1, KXD1, SNN1 and VAB2.</text>
</comment>
<comment type="subcellular location">
    <subcellularLocation>
        <location evidence="1">Endosome</location>
    </subcellularLocation>
</comment>
<comment type="similarity">
    <text evidence="3">Belongs to the BLI1 family.</text>
</comment>
<proteinExistence type="inferred from homology"/>
<protein>
    <recommendedName>
        <fullName>Biogenesis of lysosome-related organelles complex 1 subunit BLI1</fullName>
        <shortName>BLOC-1 subunit BLI1</shortName>
    </recommendedName>
    <alternativeName>
        <fullName>BLOC-1 interactor 1</fullName>
    </alternativeName>
</protein>